<name>RECA_WIGBR</name>
<sequence length="331" mass="36034">MIIENNKKKALEKALDKIEKQFGKGSIMTLGENRSMDIETISTGSLSLDIALGTGGLPMGRIVEIYGPESSGKTTLTLEVIYEAQKKGKICAFIDAEHALDPIYAKNLGVDINNLLCSQPDNGEQALEICDSLTRSGAVDLIIVDSVAALTPKAEIDGEIGDLHLGLAARMMSQAMRKLAGNLKNANTLLIFINQIRVKIGTIFGSPEVTTGGNALKFYASVRLDIRKIGTIKDGDIIIGNETRVKVVKNKISAPFRQAEFQILYGNGINTEGELITLGVNHNIIEKSGSWYSYNKNKIGQGKNNACNFLKNNPNISKEISRKIREINLIK</sequence>
<gene>
    <name evidence="1" type="primary">recA</name>
    <name type="ordered locus">WIGBR2350</name>
</gene>
<comment type="function">
    <text evidence="1">Can catalyze the hydrolysis of ATP in the presence of single-stranded DNA, the ATP-dependent uptake of single-stranded DNA by duplex DNA, and the ATP-dependent hybridization of homologous single-stranded DNAs. It interacts with LexA causing its activation and leading to its autocatalytic cleavage.</text>
</comment>
<comment type="subcellular location">
    <subcellularLocation>
        <location evidence="1">Cytoplasm</location>
    </subcellularLocation>
</comment>
<comment type="similarity">
    <text evidence="1">Belongs to the RecA family.</text>
</comment>
<organism>
    <name type="scientific">Wigglesworthia glossinidia brevipalpis</name>
    <dbReference type="NCBI Taxonomy" id="36870"/>
    <lineage>
        <taxon>Bacteria</taxon>
        <taxon>Pseudomonadati</taxon>
        <taxon>Pseudomonadota</taxon>
        <taxon>Gammaproteobacteria</taxon>
        <taxon>Enterobacterales</taxon>
        <taxon>Erwiniaceae</taxon>
        <taxon>Wigglesworthia</taxon>
    </lineage>
</organism>
<feature type="chain" id="PRO_0000122897" description="Protein RecA">
    <location>
        <begin position="1"/>
        <end position="331"/>
    </location>
</feature>
<feature type="binding site" evidence="1">
    <location>
        <begin position="67"/>
        <end position="74"/>
    </location>
    <ligand>
        <name>ATP</name>
        <dbReference type="ChEBI" id="CHEBI:30616"/>
    </ligand>
</feature>
<protein>
    <recommendedName>
        <fullName evidence="1">Protein RecA</fullName>
    </recommendedName>
    <alternativeName>
        <fullName evidence="1">Recombinase A</fullName>
    </alternativeName>
</protein>
<dbReference type="EMBL" id="BA000021">
    <property type="protein sequence ID" value="BAC24381.1"/>
    <property type="molecule type" value="Genomic_DNA"/>
</dbReference>
<dbReference type="SMR" id="Q8D2W7"/>
<dbReference type="STRING" id="36870.gene:10368727"/>
<dbReference type="KEGG" id="wbr:recA"/>
<dbReference type="eggNOG" id="COG0468">
    <property type="taxonomic scope" value="Bacteria"/>
</dbReference>
<dbReference type="HOGENOM" id="CLU_040469_3_2_6"/>
<dbReference type="OrthoDB" id="9776733at2"/>
<dbReference type="Proteomes" id="UP000000562">
    <property type="component" value="Chromosome"/>
</dbReference>
<dbReference type="GO" id="GO:0005829">
    <property type="term" value="C:cytosol"/>
    <property type="evidence" value="ECO:0007669"/>
    <property type="project" value="TreeGrafter"/>
</dbReference>
<dbReference type="GO" id="GO:0005524">
    <property type="term" value="F:ATP binding"/>
    <property type="evidence" value="ECO:0007669"/>
    <property type="project" value="UniProtKB-UniRule"/>
</dbReference>
<dbReference type="GO" id="GO:0016887">
    <property type="term" value="F:ATP hydrolysis activity"/>
    <property type="evidence" value="ECO:0007669"/>
    <property type="project" value="InterPro"/>
</dbReference>
<dbReference type="GO" id="GO:0140664">
    <property type="term" value="F:ATP-dependent DNA damage sensor activity"/>
    <property type="evidence" value="ECO:0007669"/>
    <property type="project" value="InterPro"/>
</dbReference>
<dbReference type="GO" id="GO:0003684">
    <property type="term" value="F:damaged DNA binding"/>
    <property type="evidence" value="ECO:0007669"/>
    <property type="project" value="UniProtKB-UniRule"/>
</dbReference>
<dbReference type="GO" id="GO:0003697">
    <property type="term" value="F:single-stranded DNA binding"/>
    <property type="evidence" value="ECO:0007669"/>
    <property type="project" value="UniProtKB-UniRule"/>
</dbReference>
<dbReference type="GO" id="GO:0006310">
    <property type="term" value="P:DNA recombination"/>
    <property type="evidence" value="ECO:0007669"/>
    <property type="project" value="UniProtKB-UniRule"/>
</dbReference>
<dbReference type="GO" id="GO:0006281">
    <property type="term" value="P:DNA repair"/>
    <property type="evidence" value="ECO:0007669"/>
    <property type="project" value="UniProtKB-UniRule"/>
</dbReference>
<dbReference type="GO" id="GO:0009432">
    <property type="term" value="P:SOS response"/>
    <property type="evidence" value="ECO:0007669"/>
    <property type="project" value="UniProtKB-UniRule"/>
</dbReference>
<dbReference type="CDD" id="cd00983">
    <property type="entry name" value="RecA"/>
    <property type="match status" value="1"/>
</dbReference>
<dbReference type="FunFam" id="3.40.50.300:FF:000087">
    <property type="entry name" value="Recombinase RecA"/>
    <property type="match status" value="1"/>
</dbReference>
<dbReference type="Gene3D" id="3.40.50.300">
    <property type="entry name" value="P-loop containing nucleotide triphosphate hydrolases"/>
    <property type="match status" value="1"/>
</dbReference>
<dbReference type="HAMAP" id="MF_00268">
    <property type="entry name" value="RecA"/>
    <property type="match status" value="1"/>
</dbReference>
<dbReference type="InterPro" id="IPR003593">
    <property type="entry name" value="AAA+_ATPase"/>
</dbReference>
<dbReference type="InterPro" id="IPR013765">
    <property type="entry name" value="DNA_recomb/repair_RecA"/>
</dbReference>
<dbReference type="InterPro" id="IPR020584">
    <property type="entry name" value="DNA_recomb/repair_RecA_CS"/>
</dbReference>
<dbReference type="InterPro" id="IPR027417">
    <property type="entry name" value="P-loop_NTPase"/>
</dbReference>
<dbReference type="InterPro" id="IPR049261">
    <property type="entry name" value="RecA-like_C"/>
</dbReference>
<dbReference type="InterPro" id="IPR049428">
    <property type="entry name" value="RecA-like_N"/>
</dbReference>
<dbReference type="InterPro" id="IPR020588">
    <property type="entry name" value="RecA_ATP-bd"/>
</dbReference>
<dbReference type="InterPro" id="IPR023400">
    <property type="entry name" value="RecA_C_sf"/>
</dbReference>
<dbReference type="InterPro" id="IPR020587">
    <property type="entry name" value="RecA_monomer-monomer_interface"/>
</dbReference>
<dbReference type="NCBIfam" id="TIGR02012">
    <property type="entry name" value="tigrfam_recA"/>
    <property type="match status" value="1"/>
</dbReference>
<dbReference type="PANTHER" id="PTHR45900:SF1">
    <property type="entry name" value="MITOCHONDRIAL DNA REPAIR PROTEIN RECA HOMOLOG-RELATED"/>
    <property type="match status" value="1"/>
</dbReference>
<dbReference type="PANTHER" id="PTHR45900">
    <property type="entry name" value="RECA"/>
    <property type="match status" value="1"/>
</dbReference>
<dbReference type="Pfam" id="PF00154">
    <property type="entry name" value="RecA"/>
    <property type="match status" value="1"/>
</dbReference>
<dbReference type="Pfam" id="PF21096">
    <property type="entry name" value="RecA_C"/>
    <property type="match status" value="1"/>
</dbReference>
<dbReference type="PRINTS" id="PR00142">
    <property type="entry name" value="RECA"/>
</dbReference>
<dbReference type="SMART" id="SM00382">
    <property type="entry name" value="AAA"/>
    <property type="match status" value="1"/>
</dbReference>
<dbReference type="SUPFAM" id="SSF52540">
    <property type="entry name" value="P-loop containing nucleoside triphosphate hydrolases"/>
    <property type="match status" value="1"/>
</dbReference>
<dbReference type="SUPFAM" id="SSF54752">
    <property type="entry name" value="RecA protein, C-terminal domain"/>
    <property type="match status" value="1"/>
</dbReference>
<dbReference type="PROSITE" id="PS00321">
    <property type="entry name" value="RECA_1"/>
    <property type="match status" value="1"/>
</dbReference>
<dbReference type="PROSITE" id="PS50162">
    <property type="entry name" value="RECA_2"/>
    <property type="match status" value="1"/>
</dbReference>
<dbReference type="PROSITE" id="PS50163">
    <property type="entry name" value="RECA_3"/>
    <property type="match status" value="1"/>
</dbReference>
<evidence type="ECO:0000255" key="1">
    <source>
        <dbReference type="HAMAP-Rule" id="MF_00268"/>
    </source>
</evidence>
<accession>Q8D2W7</accession>
<keyword id="KW-0067">ATP-binding</keyword>
<keyword id="KW-0963">Cytoplasm</keyword>
<keyword id="KW-0227">DNA damage</keyword>
<keyword id="KW-0233">DNA recombination</keyword>
<keyword id="KW-0234">DNA repair</keyword>
<keyword id="KW-0238">DNA-binding</keyword>
<keyword id="KW-0547">Nucleotide-binding</keyword>
<keyword id="KW-1185">Reference proteome</keyword>
<keyword id="KW-0742">SOS response</keyword>
<proteinExistence type="inferred from homology"/>
<reference key="1">
    <citation type="journal article" date="2002" name="Nat. Genet.">
        <title>Genome sequence of the endocellular obligate symbiont of tsetse flies, Wigglesworthia glossinidia.</title>
        <authorList>
            <person name="Akman L."/>
            <person name="Yamashita A."/>
            <person name="Watanabe H."/>
            <person name="Oshima K."/>
            <person name="Shiba T."/>
            <person name="Hattori M."/>
            <person name="Aksoy S."/>
        </authorList>
    </citation>
    <scope>NUCLEOTIDE SEQUENCE [LARGE SCALE GENOMIC DNA]</scope>
</reference>